<proteinExistence type="inferred from homology"/>
<name>SAHH_PYRAE</name>
<accession>Q8ZTQ7</accession>
<comment type="function">
    <text evidence="1">May play a key role in the regulation of the intracellular concentration of adenosylhomocysteine.</text>
</comment>
<comment type="catalytic activity">
    <reaction evidence="1">
        <text>S-adenosyl-L-homocysteine + H2O = L-homocysteine + adenosine</text>
        <dbReference type="Rhea" id="RHEA:21708"/>
        <dbReference type="ChEBI" id="CHEBI:15377"/>
        <dbReference type="ChEBI" id="CHEBI:16335"/>
        <dbReference type="ChEBI" id="CHEBI:57856"/>
        <dbReference type="ChEBI" id="CHEBI:58199"/>
        <dbReference type="EC" id="3.13.2.1"/>
    </reaction>
</comment>
<comment type="cofactor">
    <cofactor evidence="1">
        <name>NAD(+)</name>
        <dbReference type="ChEBI" id="CHEBI:57540"/>
    </cofactor>
    <text evidence="1">Binds 1 NAD(+) per subunit.</text>
</comment>
<comment type="pathway">
    <text evidence="1">Amino-acid biosynthesis; L-homocysteine biosynthesis; L-homocysteine from S-adenosyl-L-homocysteine: step 1/1.</text>
</comment>
<comment type="subcellular location">
    <subcellularLocation>
        <location evidence="1">Cytoplasm</location>
    </subcellularLocation>
</comment>
<comment type="similarity">
    <text evidence="1">Belongs to the adenosylhomocysteinase family.</text>
</comment>
<protein>
    <recommendedName>
        <fullName evidence="1">Adenosylhomocysteinase</fullName>
        <ecNumber evidence="1">3.13.2.1</ecNumber>
    </recommendedName>
    <alternativeName>
        <fullName evidence="1">S-adenosyl-L-homocysteine hydrolase</fullName>
        <shortName evidence="1">AdoHcyase</shortName>
    </alternativeName>
</protein>
<gene>
    <name evidence="1" type="primary">ahcY</name>
    <name type="ordered locus">PAE3140</name>
</gene>
<dbReference type="EC" id="3.13.2.1" evidence="1"/>
<dbReference type="EMBL" id="AE009441">
    <property type="protein sequence ID" value="AAL64702.1"/>
    <property type="molecule type" value="Genomic_DNA"/>
</dbReference>
<dbReference type="RefSeq" id="WP_011009170.1">
    <property type="nucleotide sequence ID" value="NC_003364.1"/>
</dbReference>
<dbReference type="SMR" id="Q8ZTQ7"/>
<dbReference type="FunCoup" id="Q8ZTQ7">
    <property type="interactions" value="155"/>
</dbReference>
<dbReference type="STRING" id="178306.PAE3140"/>
<dbReference type="EnsemblBacteria" id="AAL64702">
    <property type="protein sequence ID" value="AAL64702"/>
    <property type="gene ID" value="PAE3140"/>
</dbReference>
<dbReference type="GeneID" id="1463881"/>
<dbReference type="KEGG" id="pai:PAE3140"/>
<dbReference type="PATRIC" id="fig|178306.9.peg.2361"/>
<dbReference type="eggNOG" id="arCOG04137">
    <property type="taxonomic scope" value="Archaea"/>
</dbReference>
<dbReference type="HOGENOM" id="CLU_025194_0_2_2"/>
<dbReference type="InParanoid" id="Q8ZTQ7"/>
<dbReference type="UniPathway" id="UPA00314">
    <property type="reaction ID" value="UER00076"/>
</dbReference>
<dbReference type="Proteomes" id="UP000002439">
    <property type="component" value="Chromosome"/>
</dbReference>
<dbReference type="GO" id="GO:0005829">
    <property type="term" value="C:cytosol"/>
    <property type="evidence" value="ECO:0000318"/>
    <property type="project" value="GO_Central"/>
</dbReference>
<dbReference type="GO" id="GO:0004013">
    <property type="term" value="F:adenosylhomocysteinase activity"/>
    <property type="evidence" value="ECO:0000318"/>
    <property type="project" value="GO_Central"/>
</dbReference>
<dbReference type="GO" id="GO:0071269">
    <property type="term" value="P:L-homocysteine biosynthetic process"/>
    <property type="evidence" value="ECO:0007669"/>
    <property type="project" value="UniProtKB-UniRule"/>
</dbReference>
<dbReference type="GO" id="GO:0006730">
    <property type="term" value="P:one-carbon metabolic process"/>
    <property type="evidence" value="ECO:0007669"/>
    <property type="project" value="UniProtKB-KW"/>
</dbReference>
<dbReference type="GO" id="GO:0033353">
    <property type="term" value="P:S-adenosylmethionine cycle"/>
    <property type="evidence" value="ECO:0000318"/>
    <property type="project" value="GO_Central"/>
</dbReference>
<dbReference type="CDD" id="cd00401">
    <property type="entry name" value="SAHH"/>
    <property type="match status" value="1"/>
</dbReference>
<dbReference type="FunFam" id="3.40.50.720:FF:000004">
    <property type="entry name" value="Adenosylhomocysteinase"/>
    <property type="match status" value="1"/>
</dbReference>
<dbReference type="Gene3D" id="3.40.50.1480">
    <property type="entry name" value="Adenosylhomocysteinase-like"/>
    <property type="match status" value="1"/>
</dbReference>
<dbReference type="Gene3D" id="3.40.50.720">
    <property type="entry name" value="NAD(P)-binding Rossmann-like Domain"/>
    <property type="match status" value="1"/>
</dbReference>
<dbReference type="HAMAP" id="MF_00563">
    <property type="entry name" value="AdoHcyase"/>
    <property type="match status" value="1"/>
</dbReference>
<dbReference type="InterPro" id="IPR042172">
    <property type="entry name" value="Adenosylhomocyst_ase-like_sf"/>
</dbReference>
<dbReference type="InterPro" id="IPR000043">
    <property type="entry name" value="Adenosylhomocysteinase-like"/>
</dbReference>
<dbReference type="InterPro" id="IPR015878">
    <property type="entry name" value="Ado_hCys_hydrolase_NAD-bd"/>
</dbReference>
<dbReference type="InterPro" id="IPR036291">
    <property type="entry name" value="NAD(P)-bd_dom_sf"/>
</dbReference>
<dbReference type="InterPro" id="IPR020082">
    <property type="entry name" value="S-Ado-L-homoCys_hydrolase_CS"/>
</dbReference>
<dbReference type="NCBIfam" id="TIGR00936">
    <property type="entry name" value="ahcY"/>
    <property type="match status" value="1"/>
</dbReference>
<dbReference type="NCBIfam" id="NF004005">
    <property type="entry name" value="PRK05476.2-3"/>
    <property type="match status" value="1"/>
</dbReference>
<dbReference type="PANTHER" id="PTHR23420">
    <property type="entry name" value="ADENOSYLHOMOCYSTEINASE"/>
    <property type="match status" value="1"/>
</dbReference>
<dbReference type="PANTHER" id="PTHR23420:SF0">
    <property type="entry name" value="ADENOSYLHOMOCYSTEINASE"/>
    <property type="match status" value="1"/>
</dbReference>
<dbReference type="Pfam" id="PF05221">
    <property type="entry name" value="AdoHcyase"/>
    <property type="match status" value="1"/>
</dbReference>
<dbReference type="Pfam" id="PF00670">
    <property type="entry name" value="AdoHcyase_NAD"/>
    <property type="match status" value="1"/>
</dbReference>
<dbReference type="PIRSF" id="PIRSF001109">
    <property type="entry name" value="Ad_hcy_hydrolase"/>
    <property type="match status" value="1"/>
</dbReference>
<dbReference type="SMART" id="SM00996">
    <property type="entry name" value="AdoHcyase"/>
    <property type="match status" value="1"/>
</dbReference>
<dbReference type="SMART" id="SM00997">
    <property type="entry name" value="AdoHcyase_NAD"/>
    <property type="match status" value="1"/>
</dbReference>
<dbReference type="SUPFAM" id="SSF52283">
    <property type="entry name" value="Formate/glycerate dehydrogenase catalytic domain-like"/>
    <property type="match status" value="1"/>
</dbReference>
<dbReference type="SUPFAM" id="SSF51735">
    <property type="entry name" value="NAD(P)-binding Rossmann-fold domains"/>
    <property type="match status" value="1"/>
</dbReference>
<dbReference type="PROSITE" id="PS00738">
    <property type="entry name" value="ADOHCYASE_1"/>
    <property type="match status" value="1"/>
</dbReference>
<dbReference type="PROSITE" id="PS00739">
    <property type="entry name" value="ADOHCYASE_2"/>
    <property type="match status" value="1"/>
</dbReference>
<reference key="1">
    <citation type="journal article" date="2002" name="Proc. Natl. Acad. Sci. U.S.A.">
        <title>Genome sequence of the hyperthermophilic crenarchaeon Pyrobaculum aerophilum.</title>
        <authorList>
            <person name="Fitz-Gibbon S.T."/>
            <person name="Ladner H."/>
            <person name="Kim U.-J."/>
            <person name="Stetter K.O."/>
            <person name="Simon M.I."/>
            <person name="Miller J.H."/>
        </authorList>
    </citation>
    <scope>NUCLEOTIDE SEQUENCE [LARGE SCALE GENOMIC DNA]</scope>
    <source>
        <strain>ATCC 51768 / DSM 7523 / JCM 9630 / CIP 104966 / NBRC 100827 / IM2</strain>
    </source>
</reference>
<keyword id="KW-0963">Cytoplasm</keyword>
<keyword id="KW-0378">Hydrolase</keyword>
<keyword id="KW-0520">NAD</keyword>
<keyword id="KW-0554">One-carbon metabolism</keyword>
<keyword id="KW-1185">Reference proteome</keyword>
<feature type="chain" id="PRO_0000117010" description="Adenosylhomocysteinase">
    <location>
        <begin position="1"/>
        <end position="437"/>
    </location>
</feature>
<feature type="binding site" evidence="1">
    <location>
        <position position="54"/>
    </location>
    <ligand>
        <name>substrate</name>
    </ligand>
</feature>
<feature type="binding site" evidence="1">
    <location>
        <position position="125"/>
    </location>
    <ligand>
        <name>substrate</name>
    </ligand>
</feature>
<feature type="binding site" evidence="1">
    <location>
        <position position="170"/>
    </location>
    <ligand>
        <name>substrate</name>
    </ligand>
</feature>
<feature type="binding site" evidence="1">
    <location>
        <begin position="171"/>
        <end position="173"/>
    </location>
    <ligand>
        <name>NAD(+)</name>
        <dbReference type="ChEBI" id="CHEBI:57540"/>
    </ligand>
</feature>
<feature type="binding site" evidence="1">
    <location>
        <position position="200"/>
    </location>
    <ligand>
        <name>substrate</name>
    </ligand>
</feature>
<feature type="binding site" evidence="1">
    <location>
        <position position="204"/>
    </location>
    <ligand>
        <name>substrate</name>
    </ligand>
</feature>
<feature type="binding site" evidence="1">
    <location>
        <position position="205"/>
    </location>
    <ligand>
        <name>NAD(+)</name>
        <dbReference type="ChEBI" id="CHEBI:57540"/>
    </ligand>
</feature>
<feature type="binding site" evidence="1">
    <location>
        <begin position="234"/>
        <end position="239"/>
    </location>
    <ligand>
        <name>NAD(+)</name>
        <dbReference type="ChEBI" id="CHEBI:57540"/>
    </ligand>
</feature>
<feature type="binding site" evidence="1">
    <location>
        <position position="258"/>
    </location>
    <ligand>
        <name>NAD(+)</name>
        <dbReference type="ChEBI" id="CHEBI:57540"/>
    </ligand>
</feature>
<feature type="binding site" evidence="1">
    <location>
        <position position="293"/>
    </location>
    <ligand>
        <name>NAD(+)</name>
        <dbReference type="ChEBI" id="CHEBI:57540"/>
    </ligand>
</feature>
<feature type="binding site" evidence="1">
    <location>
        <begin position="314"/>
        <end position="316"/>
    </location>
    <ligand>
        <name>NAD(+)</name>
        <dbReference type="ChEBI" id="CHEBI:57540"/>
    </ligand>
</feature>
<feature type="binding site" evidence="1">
    <location>
        <position position="361"/>
    </location>
    <ligand>
        <name>NAD(+)</name>
        <dbReference type="ChEBI" id="CHEBI:57540"/>
    </ligand>
</feature>
<evidence type="ECO:0000255" key="1">
    <source>
        <dbReference type="HAMAP-Rule" id="MF_00563"/>
    </source>
</evidence>
<organism>
    <name type="scientific">Pyrobaculum aerophilum (strain ATCC 51768 / DSM 7523 / JCM 9630 / CIP 104966 / NBRC 100827 / IM2)</name>
    <dbReference type="NCBI Taxonomy" id="178306"/>
    <lineage>
        <taxon>Archaea</taxon>
        <taxon>Thermoproteota</taxon>
        <taxon>Thermoprotei</taxon>
        <taxon>Thermoproteales</taxon>
        <taxon>Thermoproteaceae</taxon>
        <taxon>Pyrobaculum</taxon>
    </lineage>
</organism>
<sequence>MPESRVKDSSLADRGREQLYWAELNMPVLLEIRRRFEKEKPLSGHVIAACLHVTKETGVLVRTLAAGGAEVVLIPSNPLSTQDDVAAALAQEGIHVYAWRGMSEREYYNAIGFALSFNPTITMDDGADLTATIHKIGHGVRDQTIEYVLETAGSLDAAGLFSRIRGGTEETTTGVIRLKALKKSGKLLYPIIAVNESYTKYLFDNRYGTGQSTWDGVMRATNLLIAGKNVVIAGYGWVGRGIAIRARGLGARRVIVVEVDPIRALEAVFDGYEVMPMDKAAEVGDIFITATGNIRAISLGHIFKMKDGAVLANAGHFNVEIDVAGLERVAVAKRRIRPYLEEYTLPNGKRVYLIGEGRLVNLVAAEGHPSEVMDLSFANQALAAEFLAKNKLSVDVYKLPDEIDREVARLKLKTMGIEIEELTEEQRRYISSWELGT</sequence>